<keyword id="KW-0002">3D-structure</keyword>
<keyword id="KW-0255">Endonuclease</keyword>
<keyword id="KW-0378">Hydrolase</keyword>
<keyword id="KW-0472">Membrane</keyword>
<keyword id="KW-0540">Nuclease</keyword>
<keyword id="KW-0694">RNA-binding</keyword>
<keyword id="KW-0964">Secreted</keyword>
<keyword id="KW-1266">Target cell cytoplasm</keyword>
<keyword id="KW-0800">Toxin</keyword>
<keyword id="KW-0812">Transmembrane</keyword>
<keyword id="KW-1133">Transmembrane helix</keyword>
<keyword id="KW-0820">tRNA-binding</keyword>
<keyword id="KW-0843">Virulence</keyword>
<accession>I1WVY3</accession>
<evidence type="ECO:0000250" key="1">
    <source>
        <dbReference type="UniProtKB" id="A0A1S4NYE3"/>
    </source>
</evidence>
<evidence type="ECO:0000255" key="2"/>
<evidence type="ECO:0000256" key="3">
    <source>
        <dbReference type="SAM" id="MobiDB-lite"/>
    </source>
</evidence>
<evidence type="ECO:0000269" key="4">
    <source>
    </source>
</evidence>
<evidence type="ECO:0000269" key="5">
    <source>
    </source>
</evidence>
<evidence type="ECO:0000269" key="6">
    <source>
    </source>
</evidence>
<evidence type="ECO:0000269" key="7">
    <source>
    </source>
</evidence>
<evidence type="ECO:0000269" key="8">
    <source>
    </source>
</evidence>
<evidence type="ECO:0000269" key="9">
    <source>
    </source>
</evidence>
<evidence type="ECO:0000303" key="10">
    <source>
    </source>
</evidence>
<evidence type="ECO:0000305" key="11"/>
<evidence type="ECO:0000305" key="12">
    <source>
    </source>
</evidence>
<evidence type="ECO:0000305" key="13">
    <source>
    </source>
</evidence>
<evidence type="ECO:0000305" key="14">
    <source>
    </source>
</evidence>
<evidence type="ECO:0000305" key="15">
    <source>
    </source>
</evidence>
<evidence type="ECO:0000305" key="16">
    <source>
    </source>
</evidence>
<evidence type="ECO:0000305" key="17">
    <source>
    </source>
</evidence>
<reference key="1">
    <citation type="journal article" date="2012" name="PLoS ONE">
        <title>Evolution of Burkholderia pseudomallei in recurrent melioidosis.</title>
        <authorList>
            <person name="Hayden H.S."/>
            <person name="Lim R."/>
            <person name="Brittnacher M.J."/>
            <person name="Sims E.H."/>
            <person name="Ramage E.R."/>
            <person name="Fong C."/>
            <person name="Wu Z."/>
            <person name="Crist E."/>
            <person name="Chang J."/>
            <person name="Zhou Y."/>
            <person name="Radey M."/>
            <person name="Rohmer L."/>
            <person name="Haugen E."/>
            <person name="Gillett W."/>
            <person name="Wuthiekanun V."/>
            <person name="Peacock S.J."/>
            <person name="Kaul R."/>
            <person name="Miller S.I."/>
            <person name="Manoil C."/>
            <person name="Jacobs M.A."/>
        </authorList>
    </citation>
    <scope>NUCLEOTIDE SEQUENCE [LARGE SCALE GENOMIC DNA]</scope>
    <source>
        <strain>1026b</strain>
    </source>
</reference>
<reference key="2">
    <citation type="journal article" date="2012" name="Mol. Microbiol.">
        <title>The toxin/immunity network of Burkholderia pseudomallei contact-dependent growth inhibition (CDI) systems.</title>
        <authorList>
            <person name="Nikolakakis K."/>
            <person name="Amber S."/>
            <person name="Wilbur J.S."/>
            <person name="Diner E.J."/>
            <person name="Aoki S.K."/>
            <person name="Poole S.J."/>
            <person name="Tuanyok A."/>
            <person name="Keim P.S."/>
            <person name="Peacock S."/>
            <person name="Hayes C.S."/>
            <person name="Low D.A."/>
        </authorList>
    </citation>
    <scope>FUNCTION</scope>
    <scope>INTERACTION WITH CDII</scope>
    <scope>SUBUNIT</scope>
    <scope>EXPRESSION IN E.COLI</scope>
    <scope>DOMAIN</scope>
    <scope>MUTAGENESIS OF ASP-3039</scope>
    <source>
        <strain>1026b</strain>
    </source>
</reference>
<reference key="3">
    <citation type="journal article" date="2014" name="Mol. Microbiol.">
        <title>The proton-motive force is required for translocation of CDI toxins across the inner membrane of target bacteria.</title>
        <authorList>
            <person name="Ruhe Z.C."/>
            <person name="Nguyen J.Y."/>
            <person name="Beck C.M."/>
            <person name="Low D.A."/>
            <person name="Hayes C.S."/>
        </authorList>
    </citation>
    <scope>FUNCTION</scope>
    <scope>REQUIRES PMF FOR TRANSLOCATION</scope>
    <scope>SUBCELLULAR LOCATION</scope>
    <source>
        <strain>1026b</strain>
    </source>
</reference>
<reference key="4">
    <citation type="journal article" date="2015" name="PLoS ONE">
        <title>Genetic analysis of the CDI pathway from Burkholderia pseudomallei 1026b.</title>
        <authorList>
            <person name="Koskiniemi S."/>
            <person name="Garza-Sanchez F."/>
            <person name="Edman N."/>
            <person name="Chaudhuri S."/>
            <person name="Poole S.J."/>
            <person name="Manoil C."/>
            <person name="Hayes C.S."/>
            <person name="Low D.A."/>
        </authorList>
    </citation>
    <scope>IDENTIFICATION OF POSSIBLE RECEPTORS</scope>
</reference>
<reference key="5">
    <citation type="journal article" date="2015" name="Proc. Natl. Acad. Sci. U.S.A.">
        <title>Contact-dependent growth inhibition toxins exploit multiple independent cell-entry pathways.</title>
        <authorList>
            <person name="Willett J.L."/>
            <person name="Gucinski G.C."/>
            <person name="Fatherree J.P."/>
            <person name="Low D.A."/>
            <person name="Hayes C.S."/>
        </authorList>
    </citation>
    <scope>FUNCTION</scope>
    <scope>DOMAIN</scope>
    <source>
        <strain>1026b</strain>
    </source>
</reference>
<reference key="6">
    <citation type="journal article" date="2016" name="J. Biol. Chem.">
        <title>Functional diversity of cytotoxic tRNase/immunity protein complexes from Burkholderia pseudomallei.</title>
        <authorList>
            <person name="Johnson P.M."/>
            <person name="Gucinski G.C."/>
            <person name="Garza-Sanchez F."/>
            <person name="Wong T."/>
            <person name="Hung L.W."/>
            <person name="Hayes C.S."/>
            <person name="Goulding C.W."/>
        </authorList>
    </citation>
    <scope>FUNCTION</scope>
    <scope>POSSIBLE ACTIVE SITE</scope>
    <scope>TRNA-BINDING</scope>
    <scope>MUTAGENESIS OF ASP-3039</scope>
    <source>
        <strain>1026b</strain>
    </source>
</reference>
<reference key="7">
    <citation type="journal article" date="2012" name="Proc. Natl. Acad. Sci. U.S.A.">
        <title>Structural basis of toxicity and immunity in contact-dependent growth inhibition (CDI) systems.</title>
        <authorList>
            <person name="Morse R.P."/>
            <person name="Nikolakakis K.C."/>
            <person name="Willett J.L."/>
            <person name="Gerrick E."/>
            <person name="Low D.A."/>
            <person name="Hayes C.S."/>
            <person name="Goulding C.W."/>
        </authorList>
    </citation>
    <scope>X-RAY CRYSTALLOGRAPHY (2.64 ANGSTROMS) OF 2948-3122 IN COMPLEX WITH CDII</scope>
    <scope>FUNCTION</scope>
    <scope>POSSIBLE ACTIVE SITE</scope>
    <scope>SUBUNIT</scope>
    <source>
        <strain>1026b</strain>
    </source>
</reference>
<sequence>MNKNRYRVVFNRARGALMVVQENGRASHGSGSRDARAGVVPAWLSLSPFALRHVALAVLVAAGVVPIWVNAQVVAGGAHAPSVIQTQNGLQQVNINRPGASGVSMNTYNQFDVPKPGIILNNSPINVQTQLGGIIGGNPNFQAGDAARLIVNQVNSNNPSFIRGKVEIGGAAAQLVIANQAGLVVDGGGFLNTSRATLTTGNPNFGPDGSLTGFNVNQGLISVVGAGLDTANVDQVDLLARAVQINAKAYAKTLNVVAGSNQVDYNTLNATPIAANGPAPTIAIDVSQLGGMYANRVFLVSSENGVGVANAGDIAAQAGDLTLQANGRLVLSGHTNAAGNMSLSASGGIQNSGVTYGKQSVTITTGADLTNSGALTAQQNLTANVGSLNSTGTLGAGINVDSTVGTSGDLNVTSSGQLTATGTNSAAGNATFTGSGVNLSNSATAANGNLALTATAGDVNLAGSTVSAKGAVNAQASGTVVNDRGNLSSGAGMTLGGGSLSNQGGRANSQGPLSVQMAGTVSNQNGMLSSQSTADVRGSAIQNNAGLIQSAGKQTIAGASIDNSAGRLISLNADGLSVTATGALTNAAGANVSGDPGGVIGGKGDVTVQGNTVTNSGSMSADATLHVIGQSVDNGNGALHAGQTTTVDAGNHLSNAGGRVEGQSAVLNGATLDNSQGTVNAATVSLNGTTLLNHGGTVTQTGTGPMTVAITDTLDNSNNGLIQTRSTDLSLTSTTLINDNGGTITHVGPGTLTVGNGSGTVSNKAGAIASNGRTVLQGKTIDNSAGSASGQTGLSVNAADSITNLGGKLTSNANVDVTAGGALVNDGGELGSKTAATTIHSASLSNLNGKIVSPTLTATVAGLLDNSQNGDFEANQLALTAANLKNQGGHISQWQSGPTTLAVSGTLDNSNGGVIQTNSTDLTLAPAVLDNSKGTITHGGTGTLTLTPGNGAGALQNTGGTIGTNGQAIVKAGSLDNGSGVIAAKLGLSATIAGAMNNTQGLMRSNAALSIISNGALSNHQGHIEAGTPGDTSTLSIQAASIDNTDGAVHDFGTGKMTVQGGSQIVNSHAGGVDGMGQMTGQGDVTIGAASISNTQGGQLMGANLLIQGATLDNSGGQVGNVANATGDVNVAMSGAVTNTNGSITSTRDLSVAASTLLGGGAYSAARDAAINLQGDFTTTPQTQFNIGRDLTFTLPGTFANSANLQSVHNLTVNAGNIVNTGAMTAGSLLSTHSGDLTNYGAMVGGSVAIQASGTVSNLGPVALIGASDTSGLLEIVAHDIENRDDTTLGDSMPTTTIFGLGKVALAGGKDANGNYTNAALINNSSAAIQSGASMELHADKVTNTRRVMQTSGNTSQVDPALLQQLGISMSGCAAYYIAACSGQDVHWINLFHDPNYPDYDPAPIIAALKLQPGGVFTVPPNGGQWNSGYQYTTYEGKATANTVTKLSPGAQIASGGDLDASTVKTFQNYWSSVTAAGNIKQPASLDMDGWGATGQQAPGVTVVYSGYYHYNNYDNSEHNWTLPFGDKPFVGGPGGYTQAAPADVRQYSLPDYRSTWGANGTISGNGVSVNNTAANATIPSLGLLPGQAVPGLTIGTVSGNASGTQSGAAAIKGGTPTWVDPVIASATAVNVLSNLTIPQGGLYRPNSAPNPTYLIETNPAFTRMNNFLSSDYYLNQIGVNPLTTEKRLGDGFYEQQLVRNQVTQLTGKAVLGPYTDLQGMYQSLMLAGAEWSKSLNLPLGMSLSAQQVAALTTNVIIMQTETVGGQQVLVPVVYLAKADQQNANGPLITAGNIDLKNTQVFTNSGTVKADTTLALQGKQIDNAFGALQSGGLTSLDTTGNVDLTSANVKAGSLDLNAGNKLILDTATQTTHQVSRDGATSDKTTLGPAANLNVAGDASIKTGGDFQQNAGNLNVGGNLNANIGGNWNLGVQQTGEHKVVQRANGVSDTDLNSATGSTVNVGGKSAIGVGGDLTAQGARLDFGQGGTVAAKGNVTFGAASTTSTINANSSGDQGNRSYAETRHGSDQALTGTTVKGGDTLNVVSGKDINVIGSTIDLKKGDANLLAAGDVNVGAVTERHVYNSRETHSRSGVVSGTKIASSQDATSTVANGSLISADGVSIGSGKDINVQGSTVVGTHDVALNAAHDVNITTSQDTSQSSTTYQEQHSGLMSGGGLSFSVGNSKLAQQNQSSSVTNNASTVGSVDGNLTVNAGNTLHVKGSDLVAGKDVTGTAANIVVDSATDTTRQAQQQQTSKSGLTVGLSGSVGDAINNAISETQAARESAKDSNGRASALHSIAAAGDVAFGGLGAKALLDGAKGPQAPSIGVQVSVGSSHSSMQSSEDQTIQRGSSINAGGNAKLIATGNGTPKDGNITIAGSNVNAANVALIANNQVNLVNTTDTDKTQSSNSSSGSSVGVSIGTNGIGVSASMQRAHGDGNSDAAIQNNTHINASQTATIVSGGDTNVIGANVNANKVVADVGGNLNVASVQDTTVSAAHQSSAGGGFTISQTGGGASFSAQNGHADGNYAGVNEQAGIQAGSGGFDVTVKGNTDLKGAYIASTADASKNSLTTGTLTTSDIENHSHYSANSAGFSAGASVGVSTKAVGPSSVSGSGGVTPMVFQNDSGDQSATTKSAVSAGAINITKPGEQTQDVANLNRDATNLNGTVSKTPDVQKMLSQQADTMNAAQAAGQTVSQGIGLYADGKRKDAIDAAKAAYERGDLVAMQSYIDQAKSWDEGGASRAGLQATGGALIGGLGGGSVLTAIGGAAGAGTSSLLAGQAEKISKSVGDMTGSSLVGNIAANVAATVGGALVGGSAGAAMASNVELYNAGNDPQKTDDRATIAGLQGLLNQAVAAGAKGLSTIANARNAIGNAISGALDSAADQFGTLMKRDAEGKMSQSPAELVSQGVANGINTVLGSKGGEPPLAGPSAVAVDSLTGQAANAALGATDRTPPSNAILSNSNSDNNSTQGSQSGTVTKTPNPEATGSLSGKPTQIPPLSDEVTTRSLIRENQSAVTLANKGYDVVQNPEVLGPKNPDYTINGQVFDNYAPATGNVRNIATTISNKVSSGQASNIVVNLADSSASPAAIEAQINSYPIPGLGKVIVIDKLGNITIIKPKGN</sequence>
<gene>
    <name type="primary">cdiA2</name>
    <name type="ordered locus">BP1026B_II2207</name>
</gene>
<feature type="chain" id="PRO_0000429691" description="tRNA nuclease CdiA-2">
    <location>
        <begin position="1"/>
        <end position="3122"/>
    </location>
</feature>
<feature type="transmembrane region" description="Helical" evidence="2">
    <location>
        <begin position="54"/>
        <end position="74"/>
    </location>
</feature>
<feature type="region of interest" description="Two-partner system transport domain (TPS)" evidence="11">
    <location>
        <begin position="36"/>
        <end position="205"/>
    </location>
</feature>
<feature type="region of interest" description="FHA-1" evidence="11">
    <location>
        <begin position="256"/>
        <end position="1254"/>
    </location>
</feature>
<feature type="region of interest" description="Disordered" evidence="3">
    <location>
        <begin position="492"/>
        <end position="512"/>
    </location>
</feature>
<feature type="region of interest" description="Receptor binding domain (RBD)" evidence="1">
    <location>
        <begin position="1345"/>
        <end position="1635"/>
    </location>
</feature>
<feature type="region of interest" description="Periplasmic FHA-1 repeat (pFR)" evidence="11">
    <location>
        <begin position="1790"/>
        <end position="1845"/>
    </location>
</feature>
<feature type="region of interest" description="FHA-2" evidence="11">
    <location>
        <begin position="1947"/>
        <end position="2085"/>
    </location>
</feature>
<feature type="region of interest" description="Disordered" evidence="3">
    <location>
        <begin position="2002"/>
        <end position="2031"/>
    </location>
</feature>
<feature type="region of interest" description="Pretoxin (PT) domain" evidence="11">
    <location>
        <begin position="2086"/>
        <end position="2825"/>
    </location>
</feature>
<feature type="region of interest" description="Disordered" evidence="3">
    <location>
        <begin position="2151"/>
        <end position="2174"/>
    </location>
</feature>
<feature type="region of interest" description="Disordered" evidence="3">
    <location>
        <begin position="2325"/>
        <end position="2352"/>
    </location>
</feature>
<feature type="region of interest" description="C-terminal effector domain (CT), has tRNA nuclease activity" evidence="4">
    <location>
        <begin position="2821"/>
        <end position="3122"/>
    </location>
</feature>
<feature type="region of interest" description="Truncated CT domain, has tRNA nuclease activity, sufficient for interaction with CdiI-2">
    <location>
        <begin position="2948"/>
        <end position="3122"/>
    </location>
</feature>
<feature type="region of interest" description="Disordered" evidence="3">
    <location>
        <begin position="2948"/>
        <end position="3000"/>
    </location>
</feature>
<feature type="region of interest" description="Has tRNase activity" evidence="8">
    <location>
        <begin position="2987"/>
        <end position="3122"/>
    </location>
</feature>
<feature type="short sequence motif" description="ELYN C-terminal motif" evidence="12">
    <location>
        <begin position="2826"/>
        <end position="2829"/>
    </location>
</feature>
<feature type="compositionally biased region" description="Polar residues" evidence="3">
    <location>
        <begin position="500"/>
        <end position="512"/>
    </location>
</feature>
<feature type="compositionally biased region" description="Low complexity" evidence="3">
    <location>
        <begin position="2151"/>
        <end position="2170"/>
    </location>
</feature>
<feature type="compositionally biased region" description="Low complexity" evidence="3">
    <location>
        <begin position="2325"/>
        <end position="2341"/>
    </location>
</feature>
<feature type="compositionally biased region" description="Polar residues" evidence="3">
    <location>
        <begin position="2342"/>
        <end position="2352"/>
    </location>
</feature>
<feature type="compositionally biased region" description="Polar residues" evidence="3">
    <location>
        <begin position="2953"/>
        <end position="2994"/>
    </location>
</feature>
<feature type="active site" evidence="13 17">
    <location>
        <position position="3012"/>
    </location>
</feature>
<feature type="active site" evidence="13 17">
    <location>
        <position position="3039"/>
    </location>
</feature>
<feature type="active site" evidence="13 17">
    <location>
        <position position="3048"/>
    </location>
</feature>
<feature type="active site" evidence="13 17">
    <location>
        <position position="3067"/>
    </location>
</feature>
<feature type="mutagenesis site" description="CT fragment not toxic in E.coli, no longer has tRNA nuclease activity. Truncated CT fragment no longer has nuclease activity. Unable to inhibit target cell growth when expressed as whole cdiAIB locus in B.thailandensis. CT fragment still binds tRNA." evidence="4 9">
    <original>D</original>
    <variation>A</variation>
    <location>
        <position position="3039"/>
    </location>
</feature>
<protein>
    <recommendedName>
        <fullName>tRNA nuclease CdiA-2</fullName>
        <shortName>tRNase CdiA-2</shortName>
        <ecNumber evidence="4">3.1.-.-</ecNumber>
    </recommendedName>
    <alternativeName>
        <fullName evidence="10">CdiA-Bp1026b</fullName>
    </alternativeName>
    <alternativeName>
        <fullName>Toxin CdiA-2</fullName>
    </alternativeName>
    <alternativeName>
        <fullName>Toxin CdiA-II</fullName>
    </alternativeName>
</protein>
<dbReference type="EC" id="3.1.-.-" evidence="4"/>
<dbReference type="EMBL" id="CP002834">
    <property type="protein sequence ID" value="AFI70427.1"/>
    <property type="molecule type" value="Genomic_DNA"/>
</dbReference>
<dbReference type="RefSeq" id="WP_004553664.1">
    <property type="nucleotide sequence ID" value="NC_017832.1"/>
</dbReference>
<dbReference type="PDB" id="4G6V">
    <property type="method" value="X-ray"/>
    <property type="resolution" value="2.64 A"/>
    <property type="chains" value="A/C/E/G=2948-3122"/>
</dbReference>
<dbReference type="PDBsum" id="4G6V"/>
<dbReference type="SMR" id="I1WVY3"/>
<dbReference type="KEGG" id="bpz:BP1026B_II2207"/>
<dbReference type="PATRIC" id="fig|884204.3.peg.6693"/>
<dbReference type="Proteomes" id="UP000010087">
    <property type="component" value="Chromosome 2"/>
</dbReference>
<dbReference type="GO" id="GO:0005576">
    <property type="term" value="C:extracellular region"/>
    <property type="evidence" value="ECO:0007669"/>
    <property type="project" value="UniProtKB-SubCell"/>
</dbReference>
<dbReference type="GO" id="GO:0030430">
    <property type="term" value="C:host cell cytoplasm"/>
    <property type="evidence" value="ECO:0000314"/>
    <property type="project" value="UniProtKB"/>
</dbReference>
<dbReference type="GO" id="GO:0016020">
    <property type="term" value="C:membrane"/>
    <property type="evidence" value="ECO:0007669"/>
    <property type="project" value="UniProtKB-SubCell"/>
</dbReference>
<dbReference type="GO" id="GO:0004521">
    <property type="term" value="F:RNA endonuclease activity"/>
    <property type="evidence" value="ECO:0000314"/>
    <property type="project" value="UniProtKB"/>
</dbReference>
<dbReference type="GO" id="GO:0090729">
    <property type="term" value="F:toxin activity"/>
    <property type="evidence" value="ECO:0007669"/>
    <property type="project" value="UniProtKB-KW"/>
</dbReference>
<dbReference type="GO" id="GO:0000049">
    <property type="term" value="F:tRNA binding"/>
    <property type="evidence" value="ECO:0007669"/>
    <property type="project" value="UniProtKB-KW"/>
</dbReference>
<dbReference type="GO" id="GO:0004549">
    <property type="term" value="F:tRNA-specific ribonuclease activity"/>
    <property type="evidence" value="ECO:0000314"/>
    <property type="project" value="UniProtKB"/>
</dbReference>
<dbReference type="CDD" id="cd13442">
    <property type="entry name" value="CDI_toxin_Bp1026b-like"/>
    <property type="match status" value="1"/>
</dbReference>
<dbReference type="DisProt" id="DP03022"/>
<dbReference type="Gene3D" id="3.40.1350.120">
    <property type="match status" value="1"/>
</dbReference>
<dbReference type="Gene3D" id="2.160.20.10">
    <property type="entry name" value="Single-stranded right-handed beta-helix, Pectin lyase-like"/>
    <property type="match status" value="1"/>
</dbReference>
<dbReference type="InterPro" id="IPR033806">
    <property type="entry name" value="CDI_toxin_Bp1026b-like"/>
</dbReference>
<dbReference type="InterPro" id="IPR040559">
    <property type="entry name" value="CdiA_C"/>
</dbReference>
<dbReference type="InterPro" id="IPR024973">
    <property type="entry name" value="ESPR"/>
</dbReference>
<dbReference type="InterPro" id="IPR008638">
    <property type="entry name" value="FhaB/CdiA-like_TPS"/>
</dbReference>
<dbReference type="InterPro" id="IPR008619">
    <property type="entry name" value="Filamentous_hemagglutn_rpt"/>
</dbReference>
<dbReference type="InterPro" id="IPR025157">
    <property type="entry name" value="Hemagglutinin_rpt"/>
</dbReference>
<dbReference type="InterPro" id="IPR012334">
    <property type="entry name" value="Pectin_lyas_fold"/>
</dbReference>
<dbReference type="InterPro" id="IPR011050">
    <property type="entry name" value="Pectin_lyase_fold/virulence"/>
</dbReference>
<dbReference type="NCBIfam" id="TIGR01901">
    <property type="entry name" value="adhes_NPXG"/>
    <property type="match status" value="1"/>
</dbReference>
<dbReference type="Pfam" id="PF18451">
    <property type="entry name" value="CdiA_C"/>
    <property type="match status" value="1"/>
</dbReference>
<dbReference type="Pfam" id="PF13018">
    <property type="entry name" value="ESPR"/>
    <property type="match status" value="1"/>
</dbReference>
<dbReference type="Pfam" id="PF05594">
    <property type="entry name" value="Fil_haemagg"/>
    <property type="match status" value="6"/>
</dbReference>
<dbReference type="Pfam" id="PF13332">
    <property type="entry name" value="Fil_haemagg_2"/>
    <property type="match status" value="3"/>
</dbReference>
<dbReference type="Pfam" id="PF05860">
    <property type="entry name" value="TPS"/>
    <property type="match status" value="1"/>
</dbReference>
<dbReference type="SMART" id="SM00912">
    <property type="entry name" value="Haemagg_act"/>
    <property type="match status" value="1"/>
</dbReference>
<dbReference type="SUPFAM" id="SSF51126">
    <property type="entry name" value="Pectin lyase-like"/>
    <property type="match status" value="1"/>
</dbReference>
<name>CDIA2_BURP2</name>
<proteinExistence type="evidence at protein level"/>
<comment type="function">
    <text evidence="4 5 6 7 8 9">Toxic component of a toxin-immunity protein module, which functions as a cellular contact-dependent growth inhibition (CDI) system. CDI modules allow bacteria to communicate with and inhibit the growth of closely related neighboring bacteria in a contact-dependent fashion. The C-terminal 301 residues (the CT fragment) cleaves near the C-terminus of E.coli tRNA1B(Ala), probably preventing tRNA charging, and inhibits growth in E.coli. A truncated CT fragment (residues 2948-3122) has tRNA endonuclease activity on several B.thailandensis tRNAs as well as tRNA2(Arg) where it cleaves after A-70 and U-71 (PubMed:22435733, PubMed:25174572). Inactive CT domain binds tRNA, probably in a 1:1 complex (PubMed:27445337). Toxic activity is neutralized by coexpression of the cognate immunity protein CdiI in E.coli, but not by non-cognate immunity proteins from other strains of B.pseudomallei (PubMed:22435733, PubMed:23236156). May use lipopolysaccharide as its target cell receptor (PubMed:25786241). Probably gains access to the cytoplasm of target cells (B.thailandensis strain E264) by using integral inner membrane protein BTH_II0599 (PubMed:25786241, PubMed:26305955). Protein BTH_I0359 is also implicated in an unknown fashion in CDI in B.thailandensis strain E264 (PubMed:25786241).</text>
</comment>
<comment type="function">
    <text evidence="4">Expression of this cdiAIB locus in B.thailandensis confers protection against other bacteria carrying the locus; growth inhibition requires cellular contact.</text>
</comment>
<comment type="function">
    <text evidence="1 15 16">The CdiA protein is thought to be exported from the cell through the central lumen of CdiB, the other half of its two-partner system (TPS). The TPS domain probably remains associated with CdiB while the FHA-1 domain forms an extended filament with the receptor-binding domain (RBD) at its extremity; in the secretion arrested state the C-terminus of the RBD domain form a hairpin-like structure as the FHA-2, PT and CT domains are periplasmic. Upon binding to a target cell outer membrane receptor (possibly a lipoprotein in this CDI) a signal is transmitted to activate secretion. The filament elongates slightly, the rest of CdiA is secreted and the FHA-2 domain becomes stably associated with the target cell's outer membrane where it facilitates entry of the toxic CT domain into the target cell periplasm. From there the toxic CT domain is cleaved and gains access to the target cell cytoplasm via an inner membrane protein (probably inner membrane protein BTH_II0599).</text>
</comment>
<comment type="subunit">
    <text evidence="4 5 11">Interacts with cognate immunity protein CdiI, which blocks its tRNA nuclease activity (Probable). The truncated CT fragment (residues 2948-3122) specifically interacts with cognate CdiI which inhibits the tRNA nuclease activity. The truncated CT is more stable in vitro than the original CT fragment characterized in E.coli.</text>
</comment>
<comment type="subcellular location">
    <subcellularLocation>
        <location evidence="11">Membrane</location>
        <topology evidence="11">Single-pass membrane protein</topology>
    </subcellularLocation>
    <subcellularLocation>
        <location evidence="14">Secreted</location>
    </subcellularLocation>
    <subcellularLocation>
        <location evidence="14">Target cell</location>
        <location evidence="14">Target cell cytoplasm</location>
    </subcellularLocation>
    <text evidence="6 11">Secreted to the cell surface by CdiB, its two partner secretion pathway (TPS) partner (Probable). Probably translocated into the target cell cytoplasm as intracellular CdiI inhibits tRNase activity. Toxin translocation into the target cell depends on the proton motive force (pmf) of the target cell, but not on tolA or tonB. The pmf is probably required for translocation across the target cell inner membrane from its periplasm.</text>
</comment>
<comment type="domain">
    <text evidence="4 6 8">The C-terminal domain (CT) has toxic activity, which can be exchanged between N-terminal sections from different toxin molecules (PubMed:22435733, PubMed:25174572). A subdomain of the CT has tRNase activity and can be targeted to usually non-susceptible bacteria by cloning. Exchanging this toxic domain between CdiA proteins alters the inner membrane protein delivery system but not the CdiI immunity protein, strongly suggesting CdiI recognizes only the toxic domain (PubMed:26305955).</text>
</comment>
<comment type="similarity">
    <text evidence="11">In the N-terminal section; belongs to the CdiA toxin family.</text>
</comment>
<organism>
    <name type="scientific">Burkholderia pseudomallei (strain 1026b)</name>
    <dbReference type="NCBI Taxonomy" id="884204"/>
    <lineage>
        <taxon>Bacteria</taxon>
        <taxon>Pseudomonadati</taxon>
        <taxon>Pseudomonadota</taxon>
        <taxon>Betaproteobacteria</taxon>
        <taxon>Burkholderiales</taxon>
        <taxon>Burkholderiaceae</taxon>
        <taxon>Burkholderia</taxon>
        <taxon>pseudomallei group</taxon>
    </lineage>
</organism>